<gene>
    <name evidence="1" type="primary">apaG</name>
    <name type="ordered locus">Avin_46840</name>
</gene>
<dbReference type="EMBL" id="CP001157">
    <property type="protein sequence ID" value="ACO80789.1"/>
    <property type="molecule type" value="Genomic_DNA"/>
</dbReference>
<dbReference type="RefSeq" id="WP_012703152.1">
    <property type="nucleotide sequence ID" value="NC_012560.1"/>
</dbReference>
<dbReference type="SMR" id="C1DIX0"/>
<dbReference type="STRING" id="322710.Avin_46840"/>
<dbReference type="EnsemblBacteria" id="ACO80789">
    <property type="protein sequence ID" value="ACO80789"/>
    <property type="gene ID" value="Avin_46840"/>
</dbReference>
<dbReference type="GeneID" id="88187559"/>
<dbReference type="KEGG" id="avn:Avin_46840"/>
<dbReference type="eggNOG" id="COG2967">
    <property type="taxonomic scope" value="Bacteria"/>
</dbReference>
<dbReference type="HOGENOM" id="CLU_128074_0_0_6"/>
<dbReference type="OrthoDB" id="9795226at2"/>
<dbReference type="Proteomes" id="UP000002424">
    <property type="component" value="Chromosome"/>
</dbReference>
<dbReference type="GO" id="GO:0070987">
    <property type="term" value="P:error-free translesion synthesis"/>
    <property type="evidence" value="ECO:0007669"/>
    <property type="project" value="TreeGrafter"/>
</dbReference>
<dbReference type="Gene3D" id="2.60.40.1470">
    <property type="entry name" value="ApaG domain"/>
    <property type="match status" value="1"/>
</dbReference>
<dbReference type="HAMAP" id="MF_00791">
    <property type="entry name" value="ApaG"/>
    <property type="match status" value="1"/>
</dbReference>
<dbReference type="InterPro" id="IPR007474">
    <property type="entry name" value="ApaG_domain"/>
</dbReference>
<dbReference type="InterPro" id="IPR036767">
    <property type="entry name" value="ApaG_sf"/>
</dbReference>
<dbReference type="InterPro" id="IPR023065">
    <property type="entry name" value="Uncharacterised_ApaG"/>
</dbReference>
<dbReference type="NCBIfam" id="NF003967">
    <property type="entry name" value="PRK05461.1"/>
    <property type="match status" value="1"/>
</dbReference>
<dbReference type="PANTHER" id="PTHR14289">
    <property type="entry name" value="F-BOX ONLY PROTEIN 3"/>
    <property type="match status" value="1"/>
</dbReference>
<dbReference type="PANTHER" id="PTHR14289:SF16">
    <property type="entry name" value="POLYMERASE DELTA-INTERACTING PROTEIN 2"/>
    <property type="match status" value="1"/>
</dbReference>
<dbReference type="Pfam" id="PF04379">
    <property type="entry name" value="DUF525"/>
    <property type="match status" value="1"/>
</dbReference>
<dbReference type="SUPFAM" id="SSF110069">
    <property type="entry name" value="ApaG-like"/>
    <property type="match status" value="1"/>
</dbReference>
<dbReference type="PROSITE" id="PS51087">
    <property type="entry name" value="APAG"/>
    <property type="match status" value="1"/>
</dbReference>
<organism>
    <name type="scientific">Azotobacter vinelandii (strain DJ / ATCC BAA-1303)</name>
    <dbReference type="NCBI Taxonomy" id="322710"/>
    <lineage>
        <taxon>Bacteria</taxon>
        <taxon>Pseudomonadati</taxon>
        <taxon>Pseudomonadota</taxon>
        <taxon>Gammaproteobacteria</taxon>
        <taxon>Pseudomonadales</taxon>
        <taxon>Pseudomonadaceae</taxon>
        <taxon>Azotobacter</taxon>
    </lineage>
</organism>
<name>APAG_AZOVD</name>
<accession>C1DIX0</accession>
<reference key="1">
    <citation type="journal article" date="2009" name="J. Bacteriol.">
        <title>Genome sequence of Azotobacter vinelandii, an obligate aerobe specialized to support diverse anaerobic metabolic processes.</title>
        <authorList>
            <person name="Setubal J.C."/>
            <person name="Dos Santos P."/>
            <person name="Goldman B.S."/>
            <person name="Ertesvaag H."/>
            <person name="Espin G."/>
            <person name="Rubio L.M."/>
            <person name="Valla S."/>
            <person name="Almeida N.F."/>
            <person name="Balasubramanian D."/>
            <person name="Cromes L."/>
            <person name="Curatti L."/>
            <person name="Du Z."/>
            <person name="Godsy E."/>
            <person name="Goodner B."/>
            <person name="Hellner-Burris K."/>
            <person name="Hernandez J.A."/>
            <person name="Houmiel K."/>
            <person name="Imperial J."/>
            <person name="Kennedy C."/>
            <person name="Larson T.J."/>
            <person name="Latreille P."/>
            <person name="Ligon L.S."/>
            <person name="Lu J."/>
            <person name="Maerk M."/>
            <person name="Miller N.M."/>
            <person name="Norton S."/>
            <person name="O'Carroll I.P."/>
            <person name="Paulsen I."/>
            <person name="Raulfs E.C."/>
            <person name="Roemer R."/>
            <person name="Rosser J."/>
            <person name="Segura D."/>
            <person name="Slater S."/>
            <person name="Stricklin S.L."/>
            <person name="Studholme D.J."/>
            <person name="Sun J."/>
            <person name="Viana C.J."/>
            <person name="Wallin E."/>
            <person name="Wang B."/>
            <person name="Wheeler C."/>
            <person name="Zhu H."/>
            <person name="Dean D.R."/>
            <person name="Dixon R."/>
            <person name="Wood D."/>
        </authorList>
    </citation>
    <scope>NUCLEOTIDE SEQUENCE [LARGE SCALE GENOMIC DNA]</scope>
    <source>
        <strain>DJ / ATCC BAA-1303</strain>
    </source>
</reference>
<feature type="chain" id="PRO_1000212956" description="Protein ApaG">
    <location>
        <begin position="1"/>
        <end position="126"/>
    </location>
</feature>
<feature type="domain" description="ApaG" evidence="1">
    <location>
        <begin position="2"/>
        <end position="126"/>
    </location>
</feature>
<proteinExistence type="inferred from homology"/>
<evidence type="ECO:0000255" key="1">
    <source>
        <dbReference type="HAMAP-Rule" id="MF_00791"/>
    </source>
</evidence>
<sequence length="126" mass="13902">MSDPRYQIDVSVETRYLPEQSQPEQNRYVFAYSVTIRNNGLLPAQLLSRHWLITDGDGHVQEVRGPGVIGTQPLLGPGQSHNYDSSTLLATQVGTMQGSYQMVAEDGHAFDAPIRPFRLAVPGALH</sequence>
<protein>
    <recommendedName>
        <fullName evidence="1">Protein ApaG</fullName>
    </recommendedName>
</protein>